<gene>
    <name evidence="1" type="primary">rlmH</name>
    <name type="ordered locus">VSAL_I0986</name>
</gene>
<protein>
    <recommendedName>
        <fullName evidence="1">Ribosomal RNA large subunit methyltransferase H</fullName>
        <ecNumber evidence="1">2.1.1.177</ecNumber>
    </recommendedName>
    <alternativeName>
        <fullName evidence="1">23S rRNA (pseudouridine1915-N3)-methyltransferase</fullName>
    </alternativeName>
    <alternativeName>
        <fullName evidence="1">23S rRNA m3Psi1915 methyltransferase</fullName>
    </alternativeName>
    <alternativeName>
        <fullName evidence="1">rRNA (pseudouridine-N3-)-methyltransferase RlmH</fullName>
    </alternativeName>
</protein>
<reference key="1">
    <citation type="journal article" date="2008" name="BMC Genomics">
        <title>The genome sequence of the fish pathogen Aliivibrio salmonicida strain LFI1238 shows extensive evidence of gene decay.</title>
        <authorList>
            <person name="Hjerde E."/>
            <person name="Lorentzen M.S."/>
            <person name="Holden M.T."/>
            <person name="Seeger K."/>
            <person name="Paulsen S."/>
            <person name="Bason N."/>
            <person name="Churcher C."/>
            <person name="Harris D."/>
            <person name="Norbertczak H."/>
            <person name="Quail M.A."/>
            <person name="Sanders S."/>
            <person name="Thurston S."/>
            <person name="Parkhill J."/>
            <person name="Willassen N.P."/>
            <person name="Thomson N.R."/>
        </authorList>
    </citation>
    <scope>NUCLEOTIDE SEQUENCE [LARGE SCALE GENOMIC DNA]</scope>
    <source>
        <strain>LFI1238</strain>
    </source>
</reference>
<comment type="function">
    <text evidence="1">Specifically methylates the pseudouridine at position 1915 (m3Psi1915) in 23S rRNA.</text>
</comment>
<comment type="catalytic activity">
    <reaction evidence="1">
        <text>pseudouridine(1915) in 23S rRNA + S-adenosyl-L-methionine = N(3)-methylpseudouridine(1915) in 23S rRNA + S-adenosyl-L-homocysteine + H(+)</text>
        <dbReference type="Rhea" id="RHEA:42752"/>
        <dbReference type="Rhea" id="RHEA-COMP:10221"/>
        <dbReference type="Rhea" id="RHEA-COMP:10222"/>
        <dbReference type="ChEBI" id="CHEBI:15378"/>
        <dbReference type="ChEBI" id="CHEBI:57856"/>
        <dbReference type="ChEBI" id="CHEBI:59789"/>
        <dbReference type="ChEBI" id="CHEBI:65314"/>
        <dbReference type="ChEBI" id="CHEBI:74486"/>
        <dbReference type="EC" id="2.1.1.177"/>
    </reaction>
</comment>
<comment type="subunit">
    <text evidence="1">Homodimer.</text>
</comment>
<comment type="subcellular location">
    <subcellularLocation>
        <location evidence="1">Cytoplasm</location>
    </subcellularLocation>
</comment>
<comment type="similarity">
    <text evidence="1">Belongs to the RNA methyltransferase RlmH family.</text>
</comment>
<evidence type="ECO:0000255" key="1">
    <source>
        <dbReference type="HAMAP-Rule" id="MF_00658"/>
    </source>
</evidence>
<keyword id="KW-0963">Cytoplasm</keyword>
<keyword id="KW-0489">Methyltransferase</keyword>
<keyword id="KW-0698">rRNA processing</keyword>
<keyword id="KW-0949">S-adenosyl-L-methionine</keyword>
<keyword id="KW-0808">Transferase</keyword>
<dbReference type="EC" id="2.1.1.177" evidence="1"/>
<dbReference type="EMBL" id="FM178379">
    <property type="protein sequence ID" value="CAQ78671.1"/>
    <property type="molecule type" value="Genomic_DNA"/>
</dbReference>
<dbReference type="RefSeq" id="WP_012549750.1">
    <property type="nucleotide sequence ID" value="NC_011312.1"/>
</dbReference>
<dbReference type="SMR" id="B6EIM8"/>
<dbReference type="KEGG" id="vsa:VSAL_I0986"/>
<dbReference type="eggNOG" id="COG1576">
    <property type="taxonomic scope" value="Bacteria"/>
</dbReference>
<dbReference type="HOGENOM" id="CLU_100552_1_0_6"/>
<dbReference type="Proteomes" id="UP000001730">
    <property type="component" value="Chromosome 1"/>
</dbReference>
<dbReference type="GO" id="GO:0005737">
    <property type="term" value="C:cytoplasm"/>
    <property type="evidence" value="ECO:0007669"/>
    <property type="project" value="UniProtKB-SubCell"/>
</dbReference>
<dbReference type="GO" id="GO:0070038">
    <property type="term" value="F:rRNA (pseudouridine-N3-)-methyltransferase activity"/>
    <property type="evidence" value="ECO:0007669"/>
    <property type="project" value="UniProtKB-UniRule"/>
</dbReference>
<dbReference type="CDD" id="cd18081">
    <property type="entry name" value="RlmH-like"/>
    <property type="match status" value="1"/>
</dbReference>
<dbReference type="Gene3D" id="3.40.1280.10">
    <property type="match status" value="1"/>
</dbReference>
<dbReference type="HAMAP" id="MF_00658">
    <property type="entry name" value="23SrRNA_methyltr_H"/>
    <property type="match status" value="1"/>
</dbReference>
<dbReference type="InterPro" id="IPR029028">
    <property type="entry name" value="Alpha/beta_knot_MTases"/>
</dbReference>
<dbReference type="InterPro" id="IPR003742">
    <property type="entry name" value="RlmH-like"/>
</dbReference>
<dbReference type="InterPro" id="IPR029026">
    <property type="entry name" value="tRNA_m1G_MTases_N"/>
</dbReference>
<dbReference type="NCBIfam" id="NF000984">
    <property type="entry name" value="PRK00103.1-1"/>
    <property type="match status" value="1"/>
</dbReference>
<dbReference type="NCBIfam" id="NF000986">
    <property type="entry name" value="PRK00103.1-4"/>
    <property type="match status" value="1"/>
</dbReference>
<dbReference type="NCBIfam" id="TIGR00246">
    <property type="entry name" value="tRNA_RlmH_YbeA"/>
    <property type="match status" value="1"/>
</dbReference>
<dbReference type="PANTHER" id="PTHR33603">
    <property type="entry name" value="METHYLTRANSFERASE"/>
    <property type="match status" value="1"/>
</dbReference>
<dbReference type="PANTHER" id="PTHR33603:SF1">
    <property type="entry name" value="RIBOSOMAL RNA LARGE SUBUNIT METHYLTRANSFERASE H"/>
    <property type="match status" value="1"/>
</dbReference>
<dbReference type="Pfam" id="PF02590">
    <property type="entry name" value="SPOUT_MTase"/>
    <property type="match status" value="1"/>
</dbReference>
<dbReference type="PIRSF" id="PIRSF004505">
    <property type="entry name" value="MT_bac"/>
    <property type="match status" value="1"/>
</dbReference>
<dbReference type="SUPFAM" id="SSF75217">
    <property type="entry name" value="alpha/beta knot"/>
    <property type="match status" value="1"/>
</dbReference>
<sequence>MKLQLIAVGTKMPKWVEEGYKEYSRRFPKDMPLELIEITAGKRGKNADIARILQKEGEAMLAAVPKGNRIVTLDIPGKPWNTEQLAEQLEVWKLDARDVSILIGGPEGLSPACKTAAEQSWSLSPLTLPHPLVRVVMAESLYRAWSITANHPYHRE</sequence>
<accession>B6EIM8</accession>
<proteinExistence type="inferred from homology"/>
<feature type="chain" id="PRO_0000366557" description="Ribosomal RNA large subunit methyltransferase H">
    <location>
        <begin position="1"/>
        <end position="156"/>
    </location>
</feature>
<feature type="binding site" evidence="1">
    <location>
        <position position="73"/>
    </location>
    <ligand>
        <name>S-adenosyl-L-methionine</name>
        <dbReference type="ChEBI" id="CHEBI:59789"/>
    </ligand>
</feature>
<feature type="binding site" evidence="1">
    <location>
        <position position="104"/>
    </location>
    <ligand>
        <name>S-adenosyl-L-methionine</name>
        <dbReference type="ChEBI" id="CHEBI:59789"/>
    </ligand>
</feature>
<feature type="binding site" evidence="1">
    <location>
        <begin position="123"/>
        <end position="128"/>
    </location>
    <ligand>
        <name>S-adenosyl-L-methionine</name>
        <dbReference type="ChEBI" id="CHEBI:59789"/>
    </ligand>
</feature>
<organism>
    <name type="scientific">Aliivibrio salmonicida (strain LFI1238)</name>
    <name type="common">Vibrio salmonicida (strain LFI1238)</name>
    <dbReference type="NCBI Taxonomy" id="316275"/>
    <lineage>
        <taxon>Bacteria</taxon>
        <taxon>Pseudomonadati</taxon>
        <taxon>Pseudomonadota</taxon>
        <taxon>Gammaproteobacteria</taxon>
        <taxon>Vibrionales</taxon>
        <taxon>Vibrionaceae</taxon>
        <taxon>Aliivibrio</taxon>
    </lineage>
</organism>
<name>RLMH_ALISL</name>